<gene>
    <name evidence="1" type="primary">rimM</name>
    <name type="ordered locus">Nther_1371</name>
</gene>
<keyword id="KW-0143">Chaperone</keyword>
<keyword id="KW-0963">Cytoplasm</keyword>
<keyword id="KW-1185">Reference proteome</keyword>
<keyword id="KW-0690">Ribosome biogenesis</keyword>
<keyword id="KW-0698">rRNA processing</keyword>
<protein>
    <recommendedName>
        <fullName evidence="1">Ribosome maturation factor RimM</fullName>
    </recommendedName>
</protein>
<evidence type="ECO:0000255" key="1">
    <source>
        <dbReference type="HAMAP-Rule" id="MF_00014"/>
    </source>
</evidence>
<accession>B2A2N9</accession>
<sequence length="179" mass="20890">MHPELDLVYVGKIVGTHGVKGELKVISLTDIENRFNELDRVYLVNEQDHYDPIIAHIESSFTHKNMEIVKFSEWDDINQVEGFHDWYIKIPREERPQLEEDEYYFDQITGLSVVTVEDEFLGTVTNIYQTGSNDVYEVSKEQDDKPILIPALYEVVKKIDLDEQIMIVDLPEGLLDEEE</sequence>
<organism>
    <name type="scientific">Natranaerobius thermophilus (strain ATCC BAA-1301 / DSM 18059 / JW/NM-WN-LF)</name>
    <dbReference type="NCBI Taxonomy" id="457570"/>
    <lineage>
        <taxon>Bacteria</taxon>
        <taxon>Bacillati</taxon>
        <taxon>Bacillota</taxon>
        <taxon>Clostridia</taxon>
        <taxon>Natranaerobiales</taxon>
        <taxon>Natranaerobiaceae</taxon>
        <taxon>Natranaerobius</taxon>
    </lineage>
</organism>
<comment type="function">
    <text evidence="1">An accessory protein needed during the final step in the assembly of 30S ribosomal subunit, possibly for assembly of the head region. Essential for efficient processing of 16S rRNA. May be needed both before and after RbfA during the maturation of 16S rRNA. It has affinity for free ribosomal 30S subunits but not for 70S ribosomes.</text>
</comment>
<comment type="subunit">
    <text evidence="1">Binds ribosomal protein uS19.</text>
</comment>
<comment type="subcellular location">
    <subcellularLocation>
        <location evidence="1">Cytoplasm</location>
    </subcellularLocation>
</comment>
<comment type="domain">
    <text evidence="1">The PRC barrel domain binds ribosomal protein uS19.</text>
</comment>
<comment type="similarity">
    <text evidence="1">Belongs to the RimM family.</text>
</comment>
<dbReference type="EMBL" id="CP001034">
    <property type="protein sequence ID" value="ACB84954.1"/>
    <property type="molecule type" value="Genomic_DNA"/>
</dbReference>
<dbReference type="RefSeq" id="WP_012447829.1">
    <property type="nucleotide sequence ID" value="NC_010718.1"/>
</dbReference>
<dbReference type="SMR" id="B2A2N9"/>
<dbReference type="FunCoup" id="B2A2N9">
    <property type="interactions" value="362"/>
</dbReference>
<dbReference type="STRING" id="457570.Nther_1371"/>
<dbReference type="KEGG" id="nth:Nther_1371"/>
<dbReference type="eggNOG" id="COG0806">
    <property type="taxonomic scope" value="Bacteria"/>
</dbReference>
<dbReference type="HOGENOM" id="CLU_077636_3_1_9"/>
<dbReference type="InParanoid" id="B2A2N9"/>
<dbReference type="OrthoDB" id="9810331at2"/>
<dbReference type="Proteomes" id="UP000001683">
    <property type="component" value="Chromosome"/>
</dbReference>
<dbReference type="GO" id="GO:0005737">
    <property type="term" value="C:cytoplasm"/>
    <property type="evidence" value="ECO:0007669"/>
    <property type="project" value="UniProtKB-SubCell"/>
</dbReference>
<dbReference type="GO" id="GO:0005840">
    <property type="term" value="C:ribosome"/>
    <property type="evidence" value="ECO:0007669"/>
    <property type="project" value="InterPro"/>
</dbReference>
<dbReference type="GO" id="GO:0043022">
    <property type="term" value="F:ribosome binding"/>
    <property type="evidence" value="ECO:0007669"/>
    <property type="project" value="InterPro"/>
</dbReference>
<dbReference type="GO" id="GO:0042274">
    <property type="term" value="P:ribosomal small subunit biogenesis"/>
    <property type="evidence" value="ECO:0007669"/>
    <property type="project" value="UniProtKB-UniRule"/>
</dbReference>
<dbReference type="GO" id="GO:0006364">
    <property type="term" value="P:rRNA processing"/>
    <property type="evidence" value="ECO:0007669"/>
    <property type="project" value="UniProtKB-UniRule"/>
</dbReference>
<dbReference type="Gene3D" id="2.30.30.240">
    <property type="entry name" value="PRC-barrel domain"/>
    <property type="match status" value="1"/>
</dbReference>
<dbReference type="Gene3D" id="2.40.30.60">
    <property type="entry name" value="RimM"/>
    <property type="match status" value="1"/>
</dbReference>
<dbReference type="HAMAP" id="MF_00014">
    <property type="entry name" value="Ribosome_mat_RimM"/>
    <property type="match status" value="1"/>
</dbReference>
<dbReference type="InterPro" id="IPR011033">
    <property type="entry name" value="PRC_barrel-like_sf"/>
</dbReference>
<dbReference type="InterPro" id="IPR056792">
    <property type="entry name" value="PRC_RimM"/>
</dbReference>
<dbReference type="InterPro" id="IPR011961">
    <property type="entry name" value="RimM"/>
</dbReference>
<dbReference type="InterPro" id="IPR002676">
    <property type="entry name" value="RimM_N"/>
</dbReference>
<dbReference type="InterPro" id="IPR036976">
    <property type="entry name" value="RimM_N_sf"/>
</dbReference>
<dbReference type="InterPro" id="IPR009000">
    <property type="entry name" value="Transl_B-barrel_sf"/>
</dbReference>
<dbReference type="NCBIfam" id="TIGR02273">
    <property type="entry name" value="16S_RimM"/>
    <property type="match status" value="1"/>
</dbReference>
<dbReference type="PANTHER" id="PTHR33692">
    <property type="entry name" value="RIBOSOME MATURATION FACTOR RIMM"/>
    <property type="match status" value="1"/>
</dbReference>
<dbReference type="PANTHER" id="PTHR33692:SF1">
    <property type="entry name" value="RIBOSOME MATURATION FACTOR RIMM"/>
    <property type="match status" value="1"/>
</dbReference>
<dbReference type="Pfam" id="PF24986">
    <property type="entry name" value="PRC_RimM"/>
    <property type="match status" value="1"/>
</dbReference>
<dbReference type="Pfam" id="PF01782">
    <property type="entry name" value="RimM"/>
    <property type="match status" value="1"/>
</dbReference>
<dbReference type="SUPFAM" id="SSF50346">
    <property type="entry name" value="PRC-barrel domain"/>
    <property type="match status" value="1"/>
</dbReference>
<dbReference type="SUPFAM" id="SSF50447">
    <property type="entry name" value="Translation proteins"/>
    <property type="match status" value="1"/>
</dbReference>
<name>RIMM_NATTJ</name>
<proteinExistence type="inferred from homology"/>
<reference key="1">
    <citation type="submission" date="2008-04" db="EMBL/GenBank/DDBJ databases">
        <title>Complete sequence of chromosome of Natranaerobius thermophilus JW/NM-WN-LF.</title>
        <authorList>
            <consortium name="US DOE Joint Genome Institute"/>
            <person name="Copeland A."/>
            <person name="Lucas S."/>
            <person name="Lapidus A."/>
            <person name="Glavina del Rio T."/>
            <person name="Dalin E."/>
            <person name="Tice H."/>
            <person name="Bruce D."/>
            <person name="Goodwin L."/>
            <person name="Pitluck S."/>
            <person name="Chertkov O."/>
            <person name="Brettin T."/>
            <person name="Detter J.C."/>
            <person name="Han C."/>
            <person name="Kuske C.R."/>
            <person name="Schmutz J."/>
            <person name="Larimer F."/>
            <person name="Land M."/>
            <person name="Hauser L."/>
            <person name="Kyrpides N."/>
            <person name="Lykidis A."/>
            <person name="Mesbah N.M."/>
            <person name="Wiegel J."/>
        </authorList>
    </citation>
    <scope>NUCLEOTIDE SEQUENCE [LARGE SCALE GENOMIC DNA]</scope>
    <source>
        <strain>ATCC BAA-1301 / DSM 18059 / JW/NM-WN-LF</strain>
    </source>
</reference>
<feature type="chain" id="PRO_1000089510" description="Ribosome maturation factor RimM">
    <location>
        <begin position="1"/>
        <end position="179"/>
    </location>
</feature>
<feature type="domain" description="PRC barrel" evidence="1">
    <location>
        <begin position="99"/>
        <end position="174"/>
    </location>
</feature>